<gene>
    <name type="primary">GIPC2</name>
</gene>
<feature type="chain" id="PRO_0000247187" description="PDZ domain-containing protein GIPC2">
    <location>
        <begin position="1"/>
        <end position="313"/>
    </location>
</feature>
<feature type="domain" description="PDZ" evidence="2">
    <location>
        <begin position="117"/>
        <end position="197"/>
    </location>
</feature>
<feature type="region of interest" description="Disordered" evidence="3">
    <location>
        <begin position="14"/>
        <end position="34"/>
    </location>
</feature>
<feature type="compositionally biased region" description="Basic and acidic residues" evidence="3">
    <location>
        <begin position="14"/>
        <end position="27"/>
    </location>
</feature>
<keyword id="KW-0963">Cytoplasm</keyword>
<keyword id="KW-1185">Reference proteome</keyword>
<protein>
    <recommendedName>
        <fullName>PDZ domain-containing protein GIPC2</fullName>
    </recommendedName>
</protein>
<sequence>MPLGLRRKKKFNTKETSRLVEGEHTDAAVRSLPSPPAPARRLVFHTQLAHGSATGRVENFSSIQELYAKIAGVFEIPPSEILYCTLNTPKVDMGKLLGAQIGLEDFIFAHIKGIKKEVNVYKSEDSLGLTITDNGAGYAFIKRIKDDSIIDSVKTICVGDHIEAINGENIVGWRHFDVAKKLKELKKEELFTLTLIEPKKAFDMEPRSKAGKSSTGKIGTGRETLRLRSKGPATVEEVPSEAKEKAIGKVDDLLELYMGIRDTDLATTMFEAGKDKGNPDEFAVALDETLGDFAFPDEFVFDVWGVIGDAKQE</sequence>
<reference key="1">
    <citation type="submission" date="2006-05" db="EMBL/GenBank/DDBJ databases">
        <authorList>
            <consortium name="NIH - Mammalian Gene Collection (MGC) project"/>
        </authorList>
    </citation>
    <scope>NUCLEOTIDE SEQUENCE [LARGE SCALE MRNA]</scope>
    <source>
        <strain>Hereford</strain>
        <tissue>Ascending colon</tissue>
    </source>
</reference>
<comment type="subunit">
    <text evidence="1">Probably interacts with SEMA5A.</text>
</comment>
<comment type="subcellular location">
    <subcellularLocation>
        <location evidence="4">Cytoplasm</location>
    </subcellularLocation>
</comment>
<comment type="similarity">
    <text evidence="4">Belongs to the GIPC family.</text>
</comment>
<proteinExistence type="evidence at transcript level"/>
<accession>Q1JQD4</accession>
<organism>
    <name type="scientific">Bos taurus</name>
    <name type="common">Bovine</name>
    <dbReference type="NCBI Taxonomy" id="9913"/>
    <lineage>
        <taxon>Eukaryota</taxon>
        <taxon>Metazoa</taxon>
        <taxon>Chordata</taxon>
        <taxon>Craniata</taxon>
        <taxon>Vertebrata</taxon>
        <taxon>Euteleostomi</taxon>
        <taxon>Mammalia</taxon>
        <taxon>Eutheria</taxon>
        <taxon>Laurasiatheria</taxon>
        <taxon>Artiodactyla</taxon>
        <taxon>Ruminantia</taxon>
        <taxon>Pecora</taxon>
        <taxon>Bovidae</taxon>
        <taxon>Bovinae</taxon>
        <taxon>Bos</taxon>
    </lineage>
</organism>
<dbReference type="EMBL" id="BC116034">
    <property type="protein sequence ID" value="AAI16035.1"/>
    <property type="molecule type" value="mRNA"/>
</dbReference>
<dbReference type="RefSeq" id="NP_001073748.1">
    <property type="nucleotide sequence ID" value="NM_001080279.1"/>
</dbReference>
<dbReference type="SMR" id="Q1JQD4"/>
<dbReference type="FunCoup" id="Q1JQD4">
    <property type="interactions" value="128"/>
</dbReference>
<dbReference type="STRING" id="9913.ENSBTAP00000064788"/>
<dbReference type="PaxDb" id="9913-ENSBTAP00000015583"/>
<dbReference type="PeptideAtlas" id="Q1JQD4"/>
<dbReference type="Ensembl" id="ENSBTAT00000111958.1">
    <property type="protein sequence ID" value="ENSBTAP00000100790.1"/>
    <property type="gene ID" value="ENSBTAG00000056556.1"/>
</dbReference>
<dbReference type="GeneID" id="518246"/>
<dbReference type="KEGG" id="bta:518246"/>
<dbReference type="CTD" id="54810"/>
<dbReference type="VEuPathDB" id="HostDB:ENSBTAG00000011733"/>
<dbReference type="eggNOG" id="KOG3938">
    <property type="taxonomic scope" value="Eukaryota"/>
</dbReference>
<dbReference type="GeneTree" id="ENSGT00390000003420"/>
<dbReference type="HOGENOM" id="CLU_044527_1_0_1"/>
<dbReference type="InParanoid" id="Q1JQD4"/>
<dbReference type="OMA" id="VGWRHYE"/>
<dbReference type="OrthoDB" id="6509831at2759"/>
<dbReference type="TreeFam" id="TF313878"/>
<dbReference type="Proteomes" id="UP000009136">
    <property type="component" value="Chromosome 3"/>
</dbReference>
<dbReference type="Bgee" id="ENSBTAG00000011733">
    <property type="expression patterns" value="Expressed in caput epididymis and 93 other cell types or tissues"/>
</dbReference>
<dbReference type="GO" id="GO:0016323">
    <property type="term" value="C:basolateral plasma membrane"/>
    <property type="evidence" value="ECO:0000318"/>
    <property type="project" value="GO_Central"/>
</dbReference>
<dbReference type="GO" id="GO:0005911">
    <property type="term" value="C:cell-cell junction"/>
    <property type="evidence" value="ECO:0000318"/>
    <property type="project" value="GO_Central"/>
</dbReference>
<dbReference type="GO" id="GO:0005737">
    <property type="term" value="C:cytoplasm"/>
    <property type="evidence" value="ECO:0007669"/>
    <property type="project" value="UniProtKB-SubCell"/>
</dbReference>
<dbReference type="GO" id="GO:0005886">
    <property type="term" value="C:plasma membrane"/>
    <property type="evidence" value="ECO:0000318"/>
    <property type="project" value="GO_Central"/>
</dbReference>
<dbReference type="GO" id="GO:0042802">
    <property type="term" value="F:identical protein binding"/>
    <property type="evidence" value="ECO:0007669"/>
    <property type="project" value="Ensembl"/>
</dbReference>
<dbReference type="GO" id="GO:0005102">
    <property type="term" value="F:signaling receptor binding"/>
    <property type="evidence" value="ECO:0000318"/>
    <property type="project" value="GO_Central"/>
</dbReference>
<dbReference type="GO" id="GO:0008104">
    <property type="term" value="P:protein localization"/>
    <property type="evidence" value="ECO:0000318"/>
    <property type="project" value="GO_Central"/>
</dbReference>
<dbReference type="GO" id="GO:0046928">
    <property type="term" value="P:regulation of neurotransmitter secretion"/>
    <property type="evidence" value="ECO:0000318"/>
    <property type="project" value="GO_Central"/>
</dbReference>
<dbReference type="CDD" id="cd21180">
    <property type="entry name" value="GH2_GIPC"/>
    <property type="match status" value="1"/>
</dbReference>
<dbReference type="CDD" id="cd23078">
    <property type="entry name" value="PDZ_GIPC2"/>
    <property type="match status" value="1"/>
</dbReference>
<dbReference type="FunFam" id="2.30.42.10:FF:000097">
    <property type="entry name" value="PDZ domain-containing protein GIPC1 isoform 1"/>
    <property type="match status" value="1"/>
</dbReference>
<dbReference type="Gene3D" id="2.30.42.10">
    <property type="match status" value="1"/>
</dbReference>
<dbReference type="InterPro" id="IPR055349">
    <property type="entry name" value="GH2_GIPC"/>
</dbReference>
<dbReference type="InterPro" id="IPR056814">
    <property type="entry name" value="GIPC1-3_GH1"/>
</dbReference>
<dbReference type="InterPro" id="IPR017379">
    <property type="entry name" value="GIPC1/2/3"/>
</dbReference>
<dbReference type="InterPro" id="IPR001478">
    <property type="entry name" value="PDZ"/>
</dbReference>
<dbReference type="InterPro" id="IPR036034">
    <property type="entry name" value="PDZ_sf"/>
</dbReference>
<dbReference type="PANTHER" id="PTHR12259:SF3">
    <property type="entry name" value="PDZ DOMAIN-CONTAINING PROTEIN GIPC2"/>
    <property type="match status" value="1"/>
</dbReference>
<dbReference type="PANTHER" id="PTHR12259">
    <property type="entry name" value="RGS-GAIP INTERACTING PROTEIN GIPC"/>
    <property type="match status" value="1"/>
</dbReference>
<dbReference type="Pfam" id="PF25083">
    <property type="entry name" value="GIPC1_GH1"/>
    <property type="match status" value="1"/>
</dbReference>
<dbReference type="Pfam" id="PF25082">
    <property type="entry name" value="GIPC1_GH2"/>
    <property type="match status" value="1"/>
</dbReference>
<dbReference type="Pfam" id="PF00595">
    <property type="entry name" value="PDZ"/>
    <property type="match status" value="1"/>
</dbReference>
<dbReference type="PIRSF" id="PIRSF038083">
    <property type="entry name" value="UCP038083_GIPC"/>
    <property type="match status" value="1"/>
</dbReference>
<dbReference type="SMART" id="SM00228">
    <property type="entry name" value="PDZ"/>
    <property type="match status" value="1"/>
</dbReference>
<dbReference type="SUPFAM" id="SSF50156">
    <property type="entry name" value="PDZ domain-like"/>
    <property type="match status" value="1"/>
</dbReference>
<dbReference type="PROSITE" id="PS50106">
    <property type="entry name" value="PDZ"/>
    <property type="match status" value="1"/>
</dbReference>
<evidence type="ECO:0000250" key="1"/>
<evidence type="ECO:0000255" key="2">
    <source>
        <dbReference type="PROSITE-ProRule" id="PRU00143"/>
    </source>
</evidence>
<evidence type="ECO:0000256" key="3">
    <source>
        <dbReference type="SAM" id="MobiDB-lite"/>
    </source>
</evidence>
<evidence type="ECO:0000305" key="4"/>
<name>GIPC2_BOVIN</name>